<sequence>MSGTLSQGSSPARLTLWEEENFQGRRCELMSDCSSIRELSGFRRVRSVKVESGAWVGFEYPDFQGQQFILEKGDYPRSTAWSGSSGYRTDQLLSFRPLLCANHSDSRVTLYEGENFQGCKFELSDDYPSLPAMGWASKDVGSLKVTSGAWVGYQYPGFRGYQYVLEQDRHSGEFRKYSEFGTQAHTNQLQSIRRVQH</sequence>
<keyword id="KW-0273">Eye lens protein</keyword>
<keyword id="KW-0677">Repeat</keyword>
<name>CRBA2_MACFL</name>
<reference key="1">
    <citation type="submission" date="2002-10" db="EMBL/GenBank/DDBJ databases">
        <authorList>
            <person name="Wistow G."/>
        </authorList>
    </citation>
    <scope>NUCLEOTIDE SEQUENCE [MRNA]</scope>
    <source>
        <tissue>Lens</tissue>
    </source>
</reference>
<evidence type="ECO:0000250" key="1"/>
<evidence type="ECO:0000255" key="2">
    <source>
        <dbReference type="PROSITE-ProRule" id="PRU00028"/>
    </source>
</evidence>
<evidence type="ECO:0000305" key="3"/>
<gene>
    <name type="primary">CRYBA2</name>
</gene>
<accession>Q8HY68</accession>
<feature type="chain" id="PRO_0000289603" description="Beta-crystallin A2">
    <location>
        <begin position="1"/>
        <end position="197"/>
    </location>
</feature>
<feature type="domain" description="Beta/gamma crystallin 'Greek key' 1" evidence="2">
    <location>
        <begin position="12"/>
        <end position="52"/>
    </location>
</feature>
<feature type="domain" description="Beta/gamma crystallin 'Greek key' 2" evidence="2">
    <location>
        <begin position="53"/>
        <end position="99"/>
    </location>
</feature>
<feature type="domain" description="Beta/gamma crystallin 'Greek key' 3" evidence="2">
    <location>
        <begin position="106"/>
        <end position="147"/>
    </location>
</feature>
<feature type="domain" description="Beta/gamma crystallin 'Greek key' 4" evidence="2">
    <location>
        <begin position="148"/>
        <end position="196"/>
    </location>
</feature>
<feature type="region of interest" description="N-terminal arm">
    <location>
        <begin position="1"/>
        <end position="11"/>
    </location>
</feature>
<feature type="region of interest" description="Connecting peptide">
    <location>
        <begin position="100"/>
        <end position="105"/>
    </location>
</feature>
<protein>
    <recommendedName>
        <fullName>Beta-crystallin A2</fullName>
    </recommendedName>
    <alternativeName>
        <fullName>Beta-A2 crystallin</fullName>
    </alternativeName>
</protein>
<organism>
    <name type="scientific">Macropus fuliginosus</name>
    <name type="common">Western gray kangaroo</name>
    <name type="synonym">Kangurus fuliginosus</name>
    <dbReference type="NCBI Taxonomy" id="9316"/>
    <lineage>
        <taxon>Eukaryota</taxon>
        <taxon>Metazoa</taxon>
        <taxon>Chordata</taxon>
        <taxon>Craniata</taxon>
        <taxon>Vertebrata</taxon>
        <taxon>Euteleostomi</taxon>
        <taxon>Mammalia</taxon>
        <taxon>Metatheria</taxon>
        <taxon>Diprotodontia</taxon>
        <taxon>Macropodidae</taxon>
        <taxon>Macropus</taxon>
    </lineage>
</organism>
<comment type="function">
    <text evidence="1">Crystallins are the dominant structural components of the vertebrate eye lens.</text>
</comment>
<comment type="subunit">
    <text evidence="1">Homo/heterodimer, or complexes of higher-order. The structure of beta-crystallin oligomers seems to be stabilized through interactions between the N-terminal arms (By similarity).</text>
</comment>
<comment type="domain">
    <text>Has a two-domain beta-structure, folded into four very similar Greek key motifs.</text>
</comment>
<comment type="similarity">
    <text evidence="3">Belongs to the beta/gamma-crystallin family.</text>
</comment>
<dbReference type="EMBL" id="AY160974">
    <property type="protein sequence ID" value="AAN78173.1"/>
    <property type="molecule type" value="mRNA"/>
</dbReference>
<dbReference type="SMR" id="Q8HY68"/>
<dbReference type="GO" id="GO:0005212">
    <property type="term" value="F:structural constituent of eye lens"/>
    <property type="evidence" value="ECO:0007669"/>
    <property type="project" value="UniProtKB-KW"/>
</dbReference>
<dbReference type="GO" id="GO:0002088">
    <property type="term" value="P:lens development in camera-type eye"/>
    <property type="evidence" value="ECO:0007669"/>
    <property type="project" value="TreeGrafter"/>
</dbReference>
<dbReference type="GO" id="GO:0007601">
    <property type="term" value="P:visual perception"/>
    <property type="evidence" value="ECO:0007669"/>
    <property type="project" value="TreeGrafter"/>
</dbReference>
<dbReference type="FunFam" id="2.60.20.10:FF:000004">
    <property type="entry name" value="Crystallin beta A4"/>
    <property type="match status" value="1"/>
</dbReference>
<dbReference type="FunFam" id="2.60.20.10:FF:000002">
    <property type="entry name" value="Crystallin, beta B2"/>
    <property type="match status" value="1"/>
</dbReference>
<dbReference type="Gene3D" id="2.60.20.10">
    <property type="entry name" value="Crystallins"/>
    <property type="match status" value="2"/>
</dbReference>
<dbReference type="InterPro" id="IPR050252">
    <property type="entry name" value="Beta/Gamma-Crystallin"/>
</dbReference>
<dbReference type="InterPro" id="IPR001064">
    <property type="entry name" value="Beta/gamma_crystallin"/>
</dbReference>
<dbReference type="InterPro" id="IPR011024">
    <property type="entry name" value="G_crystallin-like"/>
</dbReference>
<dbReference type="PANTHER" id="PTHR11818:SF7">
    <property type="entry name" value="BETA-CRYSTALLIN A2"/>
    <property type="match status" value="1"/>
</dbReference>
<dbReference type="PANTHER" id="PTHR11818">
    <property type="entry name" value="BETA/GAMMA CRYSTALLIN"/>
    <property type="match status" value="1"/>
</dbReference>
<dbReference type="Pfam" id="PF00030">
    <property type="entry name" value="Crystall"/>
    <property type="match status" value="2"/>
</dbReference>
<dbReference type="PRINTS" id="PR01367">
    <property type="entry name" value="BGCRYSTALLIN"/>
</dbReference>
<dbReference type="SMART" id="SM00247">
    <property type="entry name" value="XTALbg"/>
    <property type="match status" value="2"/>
</dbReference>
<dbReference type="SUPFAM" id="SSF49695">
    <property type="entry name" value="gamma-Crystallin-like"/>
    <property type="match status" value="1"/>
</dbReference>
<dbReference type="PROSITE" id="PS50915">
    <property type="entry name" value="CRYSTALLIN_BETA_GAMMA"/>
    <property type="match status" value="4"/>
</dbReference>
<proteinExistence type="evidence at transcript level"/>